<protein>
    <recommendedName>
        <fullName>S-adenosylmethionine synthase 2</fullName>
        <shortName>AdoMet synthase 2</shortName>
        <ecNumber evidence="5">2.5.1.6</ecNumber>
    </recommendedName>
    <alternativeName>
        <fullName>Methionine adenosyltransferase 2</fullName>
        <shortName>MAT 2</shortName>
    </alternativeName>
</protein>
<feature type="chain" id="PRO_0000174471" description="S-adenosylmethionine synthase 2">
    <location>
        <begin position="1"/>
        <end position="394"/>
    </location>
</feature>
<feature type="binding site" evidence="3">
    <location>
        <position position="11"/>
    </location>
    <ligand>
        <name>Mg(2+)</name>
        <dbReference type="ChEBI" id="CHEBI:18420"/>
    </ligand>
</feature>
<feature type="binding site" description="in other chain" evidence="4">
    <location>
        <position position="17"/>
    </location>
    <ligand>
        <name>ATP</name>
        <dbReference type="ChEBI" id="CHEBI:30616"/>
        <note>ligand shared between two neighboring subunits</note>
    </ligand>
</feature>
<feature type="binding site" evidence="2">
    <location>
        <position position="45"/>
    </location>
    <ligand>
        <name>K(+)</name>
        <dbReference type="ChEBI" id="CHEBI:29103"/>
    </ligand>
</feature>
<feature type="binding site" description="in other chain" evidence="2">
    <location>
        <position position="58"/>
    </location>
    <ligand>
        <name>L-methionine</name>
        <dbReference type="ChEBI" id="CHEBI:57844"/>
        <note>ligand shared between two neighboring subunits</note>
    </ligand>
</feature>
<feature type="binding site" description="in other chain" evidence="2">
    <location>
        <position position="101"/>
    </location>
    <ligand>
        <name>L-methionine</name>
        <dbReference type="ChEBI" id="CHEBI:57844"/>
        <note>ligand shared between two neighboring subunits</note>
    </ligand>
</feature>
<feature type="binding site" description="in other chain" evidence="4">
    <location>
        <begin position="169"/>
        <end position="171"/>
    </location>
    <ligand>
        <name>ATP</name>
        <dbReference type="ChEBI" id="CHEBI:30616"/>
        <note>ligand shared between two neighboring subunits</note>
    </ligand>
</feature>
<feature type="binding site" description="in other chain" evidence="4">
    <location>
        <begin position="237"/>
        <end position="240"/>
    </location>
    <ligand>
        <name>ATP</name>
        <dbReference type="ChEBI" id="CHEBI:30616"/>
        <note>ligand shared between two neighboring subunits</note>
    </ligand>
</feature>
<feature type="binding site" description="in other chain" evidence="4">
    <location>
        <position position="248"/>
    </location>
    <ligand>
        <name>ATP</name>
        <dbReference type="ChEBI" id="CHEBI:30616"/>
        <note>ligand shared between two neighboring subunits</note>
    </ligand>
</feature>
<feature type="binding site" evidence="2">
    <location>
        <position position="248"/>
    </location>
    <ligand>
        <name>L-methionine</name>
        <dbReference type="ChEBI" id="CHEBI:57844"/>
        <note>ligand shared between two neighboring subunits</note>
    </ligand>
</feature>
<feature type="binding site" description="in other chain" evidence="2">
    <location>
        <begin position="254"/>
        <end position="255"/>
    </location>
    <ligand>
        <name>ATP</name>
        <dbReference type="ChEBI" id="CHEBI:30616"/>
        <note>ligand shared between two neighboring subunits</note>
    </ligand>
</feature>
<feature type="binding site" evidence="2">
    <location>
        <position position="271"/>
    </location>
    <ligand>
        <name>ATP</name>
        <dbReference type="ChEBI" id="CHEBI:30616"/>
        <note>ligand shared between two neighboring subunits</note>
    </ligand>
</feature>
<feature type="binding site" evidence="2">
    <location>
        <position position="275"/>
    </location>
    <ligand>
        <name>ATP</name>
        <dbReference type="ChEBI" id="CHEBI:30616"/>
        <note>ligand shared between two neighboring subunits</note>
    </ligand>
</feature>
<feature type="binding site" evidence="3">
    <location>
        <position position="279"/>
    </location>
    <ligand>
        <name>ATP</name>
        <dbReference type="ChEBI" id="CHEBI:30616"/>
        <note>ligand shared between two neighboring subunits</note>
    </ligand>
</feature>
<feature type="binding site" description="in other chain" evidence="2">
    <location>
        <position position="279"/>
    </location>
    <ligand>
        <name>L-methionine</name>
        <dbReference type="ChEBI" id="CHEBI:57844"/>
        <note>ligand shared between two neighboring subunits</note>
    </ligand>
</feature>
<dbReference type="EC" id="2.5.1.6" evidence="5"/>
<dbReference type="EMBL" id="U82833">
    <property type="protein sequence ID" value="AAC05590.1"/>
    <property type="molecule type" value="mRNA"/>
</dbReference>
<dbReference type="EMBL" id="AP003211">
    <property type="protein sequence ID" value="BAC65881.1"/>
    <property type="molecule type" value="Genomic_DNA"/>
</dbReference>
<dbReference type="EMBL" id="AP014957">
    <property type="protein sequence ID" value="BAS71862.1"/>
    <property type="molecule type" value="Genomic_DNA"/>
</dbReference>
<dbReference type="RefSeq" id="XP_015613529.1">
    <property type="nucleotide sequence ID" value="XM_015758043.1"/>
</dbReference>
<dbReference type="RefSeq" id="XP_015613535.1">
    <property type="nucleotide sequence ID" value="XM_015758049.1"/>
</dbReference>
<dbReference type="RefSeq" id="XP_015613541.1">
    <property type="nucleotide sequence ID" value="XM_015758055.1"/>
</dbReference>
<dbReference type="SMR" id="P93438"/>
<dbReference type="FunCoup" id="P93438">
    <property type="interactions" value="2186"/>
</dbReference>
<dbReference type="STRING" id="39947.P93438"/>
<dbReference type="CarbonylDB" id="P93438"/>
<dbReference type="PaxDb" id="39947-P93438"/>
<dbReference type="EnsemblPlants" id="Os01t0323600-01">
    <property type="protein sequence ID" value="Os01t0323600-01"/>
    <property type="gene ID" value="Os01g0323600"/>
</dbReference>
<dbReference type="Gramene" id="Os01t0323600-01">
    <property type="protein sequence ID" value="Os01t0323600-01"/>
    <property type="gene ID" value="Os01g0323600"/>
</dbReference>
<dbReference type="eggNOG" id="KOG1506">
    <property type="taxonomic scope" value="Eukaryota"/>
</dbReference>
<dbReference type="HOGENOM" id="CLU_041802_1_1_1"/>
<dbReference type="InParanoid" id="P93438"/>
<dbReference type="OrthoDB" id="5852090at2759"/>
<dbReference type="BioCyc" id="MetaCyc:MONOMER-13932"/>
<dbReference type="PlantReactome" id="R-OSA-1119334">
    <property type="pathway name" value="Ethylene biosynthesis from methionine"/>
</dbReference>
<dbReference type="PlantReactome" id="R-OSA-1119501">
    <property type="pathway name" value="S-adenosyl-L-methionine cycle"/>
</dbReference>
<dbReference type="PlantReactome" id="R-OSA-1119624">
    <property type="pathway name" value="Methionine salvage pathway"/>
</dbReference>
<dbReference type="PlantReactome" id="R-OSA-9025754">
    <property type="pathway name" value="Mugineic acid biosynthesis"/>
</dbReference>
<dbReference type="UniPathway" id="UPA00315">
    <property type="reaction ID" value="UER00080"/>
</dbReference>
<dbReference type="Proteomes" id="UP000000763">
    <property type="component" value="Chromosome 1"/>
</dbReference>
<dbReference type="Proteomes" id="UP000059680">
    <property type="component" value="Chromosome 1"/>
</dbReference>
<dbReference type="ExpressionAtlas" id="P93438">
    <property type="expression patterns" value="baseline and differential"/>
</dbReference>
<dbReference type="GO" id="GO:0005829">
    <property type="term" value="C:cytosol"/>
    <property type="evidence" value="ECO:0000318"/>
    <property type="project" value="GO_Central"/>
</dbReference>
<dbReference type="GO" id="GO:0005524">
    <property type="term" value="F:ATP binding"/>
    <property type="evidence" value="ECO:0007669"/>
    <property type="project" value="UniProtKB-KW"/>
</dbReference>
<dbReference type="GO" id="GO:0046872">
    <property type="term" value="F:metal ion binding"/>
    <property type="evidence" value="ECO:0007669"/>
    <property type="project" value="UniProtKB-KW"/>
</dbReference>
<dbReference type="GO" id="GO:0004478">
    <property type="term" value="F:methionine adenosyltransferase activity"/>
    <property type="evidence" value="ECO:0000318"/>
    <property type="project" value="GO_Central"/>
</dbReference>
<dbReference type="GO" id="GO:0006730">
    <property type="term" value="P:one-carbon metabolic process"/>
    <property type="evidence" value="ECO:0007669"/>
    <property type="project" value="UniProtKB-KW"/>
</dbReference>
<dbReference type="GO" id="GO:0006556">
    <property type="term" value="P:S-adenosylmethionine biosynthetic process"/>
    <property type="evidence" value="ECO:0000318"/>
    <property type="project" value="GO_Central"/>
</dbReference>
<dbReference type="CDD" id="cd18079">
    <property type="entry name" value="S-AdoMet_synt"/>
    <property type="match status" value="1"/>
</dbReference>
<dbReference type="FunFam" id="3.30.300.10:FF:000001">
    <property type="entry name" value="S-adenosylmethionine synthase"/>
    <property type="match status" value="1"/>
</dbReference>
<dbReference type="FunFam" id="3.30.300.10:FF:000003">
    <property type="entry name" value="S-adenosylmethionine synthase"/>
    <property type="match status" value="1"/>
</dbReference>
<dbReference type="FunFam" id="3.30.300.10:FF:000004">
    <property type="entry name" value="S-adenosylmethionine synthase"/>
    <property type="match status" value="1"/>
</dbReference>
<dbReference type="Gene3D" id="3.30.300.10">
    <property type="match status" value="3"/>
</dbReference>
<dbReference type="HAMAP" id="MF_00086">
    <property type="entry name" value="S_AdoMet_synth1"/>
    <property type="match status" value="1"/>
</dbReference>
<dbReference type="InterPro" id="IPR022631">
    <property type="entry name" value="ADOMET_SYNTHASE_CS"/>
</dbReference>
<dbReference type="InterPro" id="IPR022630">
    <property type="entry name" value="S-AdoMet_synt_C"/>
</dbReference>
<dbReference type="InterPro" id="IPR022629">
    <property type="entry name" value="S-AdoMet_synt_central"/>
</dbReference>
<dbReference type="InterPro" id="IPR022628">
    <property type="entry name" value="S-AdoMet_synt_N"/>
</dbReference>
<dbReference type="InterPro" id="IPR002133">
    <property type="entry name" value="S-AdoMet_synthetase"/>
</dbReference>
<dbReference type="InterPro" id="IPR022636">
    <property type="entry name" value="S-AdoMet_synthetase_sfam"/>
</dbReference>
<dbReference type="NCBIfam" id="TIGR01034">
    <property type="entry name" value="metK"/>
    <property type="match status" value="1"/>
</dbReference>
<dbReference type="PANTHER" id="PTHR11964">
    <property type="entry name" value="S-ADENOSYLMETHIONINE SYNTHETASE"/>
    <property type="match status" value="1"/>
</dbReference>
<dbReference type="Pfam" id="PF02773">
    <property type="entry name" value="S-AdoMet_synt_C"/>
    <property type="match status" value="1"/>
</dbReference>
<dbReference type="Pfam" id="PF02772">
    <property type="entry name" value="S-AdoMet_synt_M"/>
    <property type="match status" value="1"/>
</dbReference>
<dbReference type="Pfam" id="PF00438">
    <property type="entry name" value="S-AdoMet_synt_N"/>
    <property type="match status" value="1"/>
</dbReference>
<dbReference type="PIRSF" id="PIRSF000497">
    <property type="entry name" value="MAT"/>
    <property type="match status" value="1"/>
</dbReference>
<dbReference type="SUPFAM" id="SSF55973">
    <property type="entry name" value="S-adenosylmethionine synthetase"/>
    <property type="match status" value="3"/>
</dbReference>
<dbReference type="PROSITE" id="PS00376">
    <property type="entry name" value="ADOMET_SYNTHASE_1"/>
    <property type="match status" value="1"/>
</dbReference>
<dbReference type="PROSITE" id="PS00377">
    <property type="entry name" value="ADOMET_SYNTHASE_2"/>
    <property type="match status" value="1"/>
</dbReference>
<comment type="function">
    <text evidence="5">Catalyzes the formation of S-adenosylmethionine from methionine and ATP. The reaction comprises two steps that are both catalyzed by the same enzyme: formation of S-adenosylmethionine (AdoMet) and triphosphate, and subsequent hydrolysis of the triphosphate.</text>
</comment>
<comment type="catalytic activity">
    <reaction evidence="5">
        <text>L-methionine + ATP + H2O = S-adenosyl-L-methionine + phosphate + diphosphate</text>
        <dbReference type="Rhea" id="RHEA:21080"/>
        <dbReference type="ChEBI" id="CHEBI:15377"/>
        <dbReference type="ChEBI" id="CHEBI:30616"/>
        <dbReference type="ChEBI" id="CHEBI:33019"/>
        <dbReference type="ChEBI" id="CHEBI:43474"/>
        <dbReference type="ChEBI" id="CHEBI:57844"/>
        <dbReference type="ChEBI" id="CHEBI:59789"/>
        <dbReference type="EC" id="2.5.1.6"/>
    </reaction>
</comment>
<comment type="cofactor">
    <cofactor evidence="5">
        <name>Mn(2+)</name>
        <dbReference type="ChEBI" id="CHEBI:29035"/>
    </cofactor>
    <cofactor evidence="5">
        <name>Mg(2+)</name>
        <dbReference type="ChEBI" id="CHEBI:18420"/>
    </cofactor>
    <cofactor evidence="5">
        <name>Co(2+)</name>
        <dbReference type="ChEBI" id="CHEBI:48828"/>
    </cofactor>
    <text evidence="3 5">Binds 2 divalent ions per subunit. The metal ions interact primarily with the substrate (By similarity). Can utilize magnesium, manganese or cobalt (in vitro) (By similarity).</text>
</comment>
<comment type="cofactor">
    <cofactor evidence="5">
        <name>K(+)</name>
        <dbReference type="ChEBI" id="CHEBI:29103"/>
    </cofactor>
    <text evidence="3">Binds 1 potassium ion per subunit. The potassium ion interacts primarily with the substrate (By similarity).</text>
</comment>
<comment type="pathway">
    <text evidence="5">Amino-acid biosynthesis; S-adenosyl-L-methionine biosynthesis; S-adenosyl-L-methionine from L-methionine: step 1/1.</text>
</comment>
<comment type="subunit">
    <text evidence="1">Homotetramer.</text>
</comment>
<comment type="subcellular location">
    <subcellularLocation>
        <location evidence="1">Cytoplasm</location>
    </subcellularLocation>
</comment>
<comment type="similarity">
    <text evidence="6">Belongs to the AdoMet synthase family.</text>
</comment>
<organism>
    <name type="scientific">Oryza sativa subsp. japonica</name>
    <name type="common">Rice</name>
    <dbReference type="NCBI Taxonomy" id="39947"/>
    <lineage>
        <taxon>Eukaryota</taxon>
        <taxon>Viridiplantae</taxon>
        <taxon>Streptophyta</taxon>
        <taxon>Embryophyta</taxon>
        <taxon>Tracheophyta</taxon>
        <taxon>Spermatophyta</taxon>
        <taxon>Magnoliopsida</taxon>
        <taxon>Liliopsida</taxon>
        <taxon>Poales</taxon>
        <taxon>Poaceae</taxon>
        <taxon>BOP clade</taxon>
        <taxon>Oryzoideae</taxon>
        <taxon>Oryzeae</taxon>
        <taxon>Oryzinae</taxon>
        <taxon>Oryza</taxon>
        <taxon>Oryza sativa</taxon>
    </lineage>
</organism>
<reference key="1">
    <citation type="journal article" date="1997" name="Biochim. Biophys. Acta">
        <title>Structure and expression of two cDNAs encoding S-adenosyl-L-methionine synthetase of rice (Oryza sativa L.).</title>
        <authorList>
            <person name="Lee J.-H."/>
            <person name="Chae H.S."/>
            <person name="Lee J.-H."/>
            <person name="Hwang B."/>
            <person name="Hahn K.W."/>
            <person name="Kang B.G."/>
            <person name="Kim W.T."/>
        </authorList>
    </citation>
    <scope>NUCLEOTIDE SEQUENCE [MRNA]</scope>
</reference>
<reference key="2">
    <citation type="journal article" date="2002" name="Nature">
        <title>The genome sequence and structure of rice chromosome 1.</title>
        <authorList>
            <person name="Sasaki T."/>
            <person name="Matsumoto T."/>
            <person name="Yamamoto K."/>
            <person name="Sakata K."/>
            <person name="Baba T."/>
            <person name="Katayose Y."/>
            <person name="Wu J."/>
            <person name="Niimura Y."/>
            <person name="Cheng Z."/>
            <person name="Nagamura Y."/>
            <person name="Antonio B.A."/>
            <person name="Kanamori H."/>
            <person name="Hosokawa S."/>
            <person name="Masukawa M."/>
            <person name="Arikawa K."/>
            <person name="Chiden Y."/>
            <person name="Hayashi M."/>
            <person name="Okamoto M."/>
            <person name="Ando T."/>
            <person name="Aoki H."/>
            <person name="Arita K."/>
            <person name="Hamada M."/>
            <person name="Harada C."/>
            <person name="Hijishita S."/>
            <person name="Honda M."/>
            <person name="Ichikawa Y."/>
            <person name="Idonuma A."/>
            <person name="Iijima M."/>
            <person name="Ikeda M."/>
            <person name="Ikeno M."/>
            <person name="Ito S."/>
            <person name="Ito T."/>
            <person name="Ito Y."/>
            <person name="Ito Y."/>
            <person name="Iwabuchi A."/>
            <person name="Kamiya K."/>
            <person name="Karasawa W."/>
            <person name="Katagiri S."/>
            <person name="Kikuta A."/>
            <person name="Kobayashi N."/>
            <person name="Kono I."/>
            <person name="Machita K."/>
            <person name="Maehara T."/>
            <person name="Mizuno H."/>
            <person name="Mizubayashi T."/>
            <person name="Mukai Y."/>
            <person name="Nagasaki H."/>
            <person name="Nakashima M."/>
            <person name="Nakama Y."/>
            <person name="Nakamichi Y."/>
            <person name="Nakamura M."/>
            <person name="Namiki N."/>
            <person name="Negishi M."/>
            <person name="Ohta I."/>
            <person name="Ono N."/>
            <person name="Saji S."/>
            <person name="Sakai K."/>
            <person name="Shibata M."/>
            <person name="Shimokawa T."/>
            <person name="Shomura A."/>
            <person name="Song J."/>
            <person name="Takazaki Y."/>
            <person name="Terasawa K."/>
            <person name="Tsuji K."/>
            <person name="Waki K."/>
            <person name="Yamagata H."/>
            <person name="Yamane H."/>
            <person name="Yoshiki S."/>
            <person name="Yoshihara R."/>
            <person name="Yukawa K."/>
            <person name="Zhong H."/>
            <person name="Iwama H."/>
            <person name="Endo T."/>
            <person name="Ito H."/>
            <person name="Hahn J.H."/>
            <person name="Kim H.-I."/>
            <person name="Eun M.-Y."/>
            <person name="Yano M."/>
            <person name="Jiang J."/>
            <person name="Gojobori T."/>
        </authorList>
    </citation>
    <scope>NUCLEOTIDE SEQUENCE [LARGE SCALE GENOMIC DNA]</scope>
    <source>
        <strain>cv. Nipponbare</strain>
    </source>
</reference>
<reference key="3">
    <citation type="journal article" date="2005" name="Nature">
        <title>The map-based sequence of the rice genome.</title>
        <authorList>
            <consortium name="International rice genome sequencing project (IRGSP)"/>
        </authorList>
    </citation>
    <scope>NUCLEOTIDE SEQUENCE [LARGE SCALE GENOMIC DNA]</scope>
    <source>
        <strain>cv. Nipponbare</strain>
    </source>
</reference>
<reference key="4">
    <citation type="journal article" date="2013" name="Rice">
        <title>Improvement of the Oryza sativa Nipponbare reference genome using next generation sequence and optical map data.</title>
        <authorList>
            <person name="Kawahara Y."/>
            <person name="de la Bastide M."/>
            <person name="Hamilton J.P."/>
            <person name="Kanamori H."/>
            <person name="McCombie W.R."/>
            <person name="Ouyang S."/>
            <person name="Schwartz D.C."/>
            <person name="Tanaka T."/>
            <person name="Wu J."/>
            <person name="Zhou S."/>
            <person name="Childs K.L."/>
            <person name="Davidson R.M."/>
            <person name="Lin H."/>
            <person name="Quesada-Ocampo L."/>
            <person name="Vaillancourt B."/>
            <person name="Sakai H."/>
            <person name="Lee S.S."/>
            <person name="Kim J."/>
            <person name="Numa H."/>
            <person name="Itoh T."/>
            <person name="Buell C.R."/>
            <person name="Matsumoto T."/>
        </authorList>
    </citation>
    <scope>GENOME REANNOTATION</scope>
    <source>
        <strain>cv. Nipponbare</strain>
    </source>
</reference>
<keyword id="KW-0067">ATP-binding</keyword>
<keyword id="KW-0170">Cobalt</keyword>
<keyword id="KW-0963">Cytoplasm</keyword>
<keyword id="KW-0460">Magnesium</keyword>
<keyword id="KW-0479">Metal-binding</keyword>
<keyword id="KW-0547">Nucleotide-binding</keyword>
<keyword id="KW-0554">One-carbon metabolism</keyword>
<keyword id="KW-0630">Potassium</keyword>
<keyword id="KW-1185">Reference proteome</keyword>
<keyword id="KW-0808">Transferase</keyword>
<sequence>MAAETFLFTSESVNEGHPDKLCDQVSDAVLDACLAQDPDSKVACETCTKTNMVMVFGEITTKATVDYEKIVRDTCRGIGFVSDDVGLDADRCKVLVNIEQQSPDIAQGVHGHFTKRPEEIGAGDQGHMFGYATDETPELMPLSHVLATKLGARLTEVRKNGTCAWLRPDGKTQVTVEYLNDAGAMVPVRVHTVLISTQHDETVTNDEIAADLKEHVIKPVIPDKYLDEKTIFHLNPSGRFVIGGPHGDAGLTGRKIIIDTYGGWGAHGGGAFSGKDPTKVDRSGAYIARQAAKSIVASGLARRCIVQVSYAIGVPEPLSVFVDSYGTGKIPDKEILKIVKENFDFRPGMMTINLDLKRGGNRFIKTAAYGHFGREDPDFTWEVVKPLKYEKASS</sequence>
<evidence type="ECO:0000250" key="1"/>
<evidence type="ECO:0000250" key="2">
    <source>
        <dbReference type="UniProtKB" id="P0A817"/>
    </source>
</evidence>
<evidence type="ECO:0000250" key="3">
    <source>
        <dbReference type="UniProtKB" id="P13444"/>
    </source>
</evidence>
<evidence type="ECO:0000250" key="4">
    <source>
        <dbReference type="UniProtKB" id="Q00266"/>
    </source>
</evidence>
<evidence type="ECO:0000250" key="5">
    <source>
        <dbReference type="UniProtKB" id="Q96551"/>
    </source>
</evidence>
<evidence type="ECO:0000305" key="6"/>
<accession>P93438</accession>
<accession>Q7F660</accession>
<proteinExistence type="evidence at transcript level"/>
<gene>
    <name type="primary">SAM2</name>
    <name type="synonym">SAMS2</name>
    <name type="ordered locus">Os01g0323600</name>
    <name type="ordered locus">LOC_Os01g22010</name>
    <name type="ORF">OSJNBa0011P19.8</name>
</gene>
<name>METK2_ORYSJ</name>